<sequence length="227" mass="25495">MNSIEFPLLDQKTKNSVISTTLNDLSNWSRLSSLWPLLYGTSCCFIEFASLIGSRFDFDRYGLVPRSSPRQADLILTAGTVTMKMAPSLVRLYEQMPEPKYVIAMGACTITGGMFSTDSYSTVRGVDKLIPVDVYLPGCPPKPEAVIDAITKLRKKISREIDEDPISYQRENRSFTTNHKFDVGRSTHTGNSNQGLFYQPSSISEMTSDTFLKYKKVQYPATNEKVN</sequence>
<organism>
    <name type="scientific">Pisum sativum</name>
    <name type="common">Garden pea</name>
    <name type="synonym">Lathyrus oleraceus</name>
    <dbReference type="NCBI Taxonomy" id="3888"/>
    <lineage>
        <taxon>Eukaryota</taxon>
        <taxon>Viridiplantae</taxon>
        <taxon>Streptophyta</taxon>
        <taxon>Embryophyta</taxon>
        <taxon>Tracheophyta</taxon>
        <taxon>Spermatophyta</taxon>
        <taxon>Magnoliopsida</taxon>
        <taxon>eudicotyledons</taxon>
        <taxon>Gunneridae</taxon>
        <taxon>Pentapetalae</taxon>
        <taxon>rosids</taxon>
        <taxon>fabids</taxon>
        <taxon>Fabales</taxon>
        <taxon>Fabaceae</taxon>
        <taxon>Papilionoideae</taxon>
        <taxon>50 kb inversion clade</taxon>
        <taxon>NPAAA clade</taxon>
        <taxon>Hologalegina</taxon>
        <taxon>IRL clade</taxon>
        <taxon>Fabeae</taxon>
        <taxon>Pisum</taxon>
    </lineage>
</organism>
<feature type="chain" id="PRO_0000118753" description="NAD(P)H-quinone oxidoreductase subunit K, chloroplastic">
    <location>
        <begin position="1"/>
        <end position="227"/>
    </location>
</feature>
<feature type="binding site" evidence="1">
    <location>
        <position position="43"/>
    </location>
    <ligand>
        <name>[4Fe-4S] cluster</name>
        <dbReference type="ChEBI" id="CHEBI:49883"/>
    </ligand>
</feature>
<feature type="binding site" evidence="1">
    <location>
        <position position="44"/>
    </location>
    <ligand>
        <name>[4Fe-4S] cluster</name>
        <dbReference type="ChEBI" id="CHEBI:49883"/>
    </ligand>
</feature>
<feature type="binding site" evidence="1">
    <location>
        <position position="108"/>
    </location>
    <ligand>
        <name>[4Fe-4S] cluster</name>
        <dbReference type="ChEBI" id="CHEBI:49883"/>
    </ligand>
</feature>
<feature type="binding site" evidence="1">
    <location>
        <position position="139"/>
    </location>
    <ligand>
        <name>[4Fe-4S] cluster</name>
        <dbReference type="ChEBI" id="CHEBI:49883"/>
    </ligand>
</feature>
<comment type="function">
    <text evidence="3">NDH shuttles electrons from NAD(P)H:plastoquinone, via FMN and iron-sulfur (Fe-S) centers, to quinones in the photosynthetic chain and possibly in a chloroplast respiratory chain. It has NADH- and deamino-NADH-specific dehydrogenase activity, using ferricyanide or quinones as acceptors. The immediate electron acceptor for the enzyme in this species is believed to be plastoquinone. Couples the redox reaction to proton translocation, and thus conserves the redox energy in a proton gradient.</text>
</comment>
<comment type="catalytic activity">
    <reaction evidence="1 2 3">
        <text>a plastoquinone + NADH + (n+1) H(+)(in) = a plastoquinol + NAD(+) + n H(+)(out)</text>
        <dbReference type="Rhea" id="RHEA:42608"/>
        <dbReference type="Rhea" id="RHEA-COMP:9561"/>
        <dbReference type="Rhea" id="RHEA-COMP:9562"/>
        <dbReference type="ChEBI" id="CHEBI:15378"/>
        <dbReference type="ChEBI" id="CHEBI:17757"/>
        <dbReference type="ChEBI" id="CHEBI:57540"/>
        <dbReference type="ChEBI" id="CHEBI:57945"/>
        <dbReference type="ChEBI" id="CHEBI:62192"/>
    </reaction>
</comment>
<comment type="catalytic activity">
    <reaction evidence="1 2 3">
        <text>a plastoquinone + NADPH + (n+1) H(+)(in) = a plastoquinol + NADP(+) + n H(+)(out)</text>
        <dbReference type="Rhea" id="RHEA:42612"/>
        <dbReference type="Rhea" id="RHEA-COMP:9561"/>
        <dbReference type="Rhea" id="RHEA-COMP:9562"/>
        <dbReference type="ChEBI" id="CHEBI:15378"/>
        <dbReference type="ChEBI" id="CHEBI:17757"/>
        <dbReference type="ChEBI" id="CHEBI:57783"/>
        <dbReference type="ChEBI" id="CHEBI:58349"/>
        <dbReference type="ChEBI" id="CHEBI:62192"/>
    </reaction>
</comment>
<comment type="cofactor">
    <cofactor evidence="1">
        <name>[4Fe-4S] cluster</name>
        <dbReference type="ChEBI" id="CHEBI:49883"/>
    </cofactor>
    <text evidence="1">Binds 1 [4Fe-4S] cluster.</text>
</comment>
<comment type="subunit">
    <text evidence="1 2 3">NDH is composed of at least 16 different subunits, 5 of which are encoded in the nucleus.</text>
</comment>
<comment type="subcellular location">
    <subcellularLocation>
        <location evidence="5 6">Plastid</location>
        <location evidence="5 6">Chloroplast thylakoid membrane</location>
        <topology evidence="5 6">Peripheral membrane protein</topology>
        <orientation evidence="5 6">Stromal side</orientation>
    </subcellularLocation>
</comment>
<comment type="similarity">
    <text evidence="1">Belongs to the complex I 20 kDa subunit family.</text>
</comment>
<geneLocation type="chloroplast" evidence="7"/>
<proteinExistence type="evidence at protein level"/>
<accession>O98679</accession>
<keyword id="KW-0004">4Fe-4S</keyword>
<keyword id="KW-0150">Chloroplast</keyword>
<keyword id="KW-0903">Direct protein sequencing</keyword>
<keyword id="KW-0408">Iron</keyword>
<keyword id="KW-0411">Iron-sulfur</keyword>
<keyword id="KW-0472">Membrane</keyword>
<keyword id="KW-0479">Metal-binding</keyword>
<keyword id="KW-0520">NAD</keyword>
<keyword id="KW-0521">NADP</keyword>
<keyword id="KW-0934">Plastid</keyword>
<keyword id="KW-0618">Plastoquinone</keyword>
<keyword id="KW-0874">Quinone</keyword>
<keyword id="KW-0793">Thylakoid</keyword>
<keyword id="KW-1278">Translocase</keyword>
<keyword id="KW-0813">Transport</keyword>
<name>NDHK_PEA</name>
<evidence type="ECO:0000255" key="1">
    <source>
        <dbReference type="HAMAP-Rule" id="MF_01356"/>
    </source>
</evidence>
<evidence type="ECO:0000269" key="2">
    <source>
    </source>
</evidence>
<evidence type="ECO:0000269" key="3">
    <source>
    </source>
</evidence>
<evidence type="ECO:0000305" key="4"/>
<evidence type="ECO:0000305" key="5">
    <source>
    </source>
</evidence>
<evidence type="ECO:0000305" key="6">
    <source>
    </source>
</evidence>
<evidence type="ECO:0000312" key="7">
    <source>
        <dbReference type="EMBL" id="CAA06191.1"/>
    </source>
</evidence>
<dbReference type="EC" id="7.1.1.-" evidence="1"/>
<dbReference type="EMBL" id="AJ004882">
    <property type="protein sequence ID" value="CAA06191.1"/>
    <property type="molecule type" value="Genomic_DNA"/>
</dbReference>
<dbReference type="SMR" id="O98679"/>
<dbReference type="GO" id="GO:0009535">
    <property type="term" value="C:chloroplast thylakoid membrane"/>
    <property type="evidence" value="ECO:0000314"/>
    <property type="project" value="UniProtKB"/>
</dbReference>
<dbReference type="GO" id="GO:0045271">
    <property type="term" value="C:respiratory chain complex I"/>
    <property type="evidence" value="ECO:0007669"/>
    <property type="project" value="TreeGrafter"/>
</dbReference>
<dbReference type="GO" id="GO:0051539">
    <property type="term" value="F:4 iron, 4 sulfur cluster binding"/>
    <property type="evidence" value="ECO:0007669"/>
    <property type="project" value="UniProtKB-KW"/>
</dbReference>
<dbReference type="GO" id="GO:0005506">
    <property type="term" value="F:iron ion binding"/>
    <property type="evidence" value="ECO:0007669"/>
    <property type="project" value="UniProtKB-UniRule"/>
</dbReference>
<dbReference type="GO" id="GO:0008137">
    <property type="term" value="F:NADH dehydrogenase (ubiquinone) activity"/>
    <property type="evidence" value="ECO:0007669"/>
    <property type="project" value="InterPro"/>
</dbReference>
<dbReference type="GO" id="GO:0048038">
    <property type="term" value="F:quinone binding"/>
    <property type="evidence" value="ECO:0007669"/>
    <property type="project" value="UniProtKB-KW"/>
</dbReference>
<dbReference type="GO" id="GO:0009060">
    <property type="term" value="P:aerobic respiration"/>
    <property type="evidence" value="ECO:0007669"/>
    <property type="project" value="TreeGrafter"/>
</dbReference>
<dbReference type="GO" id="GO:0015990">
    <property type="term" value="P:electron transport coupled proton transport"/>
    <property type="evidence" value="ECO:0007669"/>
    <property type="project" value="TreeGrafter"/>
</dbReference>
<dbReference type="GO" id="GO:0019684">
    <property type="term" value="P:photosynthesis, light reaction"/>
    <property type="evidence" value="ECO:0007669"/>
    <property type="project" value="UniProtKB-UniRule"/>
</dbReference>
<dbReference type="FunFam" id="3.40.50.12280:FF:000003">
    <property type="entry name" value="NAD(P)H-quinone oxidoreductase subunit K, chloroplastic"/>
    <property type="match status" value="1"/>
</dbReference>
<dbReference type="Gene3D" id="3.40.50.12280">
    <property type="match status" value="1"/>
</dbReference>
<dbReference type="HAMAP" id="MF_01356">
    <property type="entry name" value="NDH1_NuoB"/>
    <property type="match status" value="1"/>
</dbReference>
<dbReference type="InterPro" id="IPR006137">
    <property type="entry name" value="NADH_UbQ_OxRdtase-like_20kDa"/>
</dbReference>
<dbReference type="InterPro" id="IPR006138">
    <property type="entry name" value="NADH_UQ_OxRdtase_20Kd_su"/>
</dbReference>
<dbReference type="NCBIfam" id="TIGR01957">
    <property type="entry name" value="nuoB_fam"/>
    <property type="match status" value="1"/>
</dbReference>
<dbReference type="NCBIfam" id="NF005012">
    <property type="entry name" value="PRK06411.1"/>
    <property type="match status" value="1"/>
</dbReference>
<dbReference type="PANTHER" id="PTHR11995">
    <property type="entry name" value="NADH DEHYDROGENASE"/>
    <property type="match status" value="1"/>
</dbReference>
<dbReference type="PANTHER" id="PTHR11995:SF14">
    <property type="entry name" value="NADH DEHYDROGENASE [UBIQUINONE] IRON-SULFUR PROTEIN 7, MITOCHONDRIAL"/>
    <property type="match status" value="1"/>
</dbReference>
<dbReference type="Pfam" id="PF01058">
    <property type="entry name" value="Oxidored_q6"/>
    <property type="match status" value="1"/>
</dbReference>
<dbReference type="SUPFAM" id="SSF56770">
    <property type="entry name" value="HydA/Nqo6-like"/>
    <property type="match status" value="1"/>
</dbReference>
<dbReference type="PROSITE" id="PS01150">
    <property type="entry name" value="COMPLEX1_20K"/>
    <property type="match status" value="1"/>
</dbReference>
<protein>
    <recommendedName>
        <fullName evidence="1">NAD(P)H-quinone oxidoreductase subunit K, chloroplastic</fullName>
        <ecNumber evidence="1">7.1.1.-</ecNumber>
    </recommendedName>
    <alternativeName>
        <fullName evidence="1">NAD(P)H dehydrogenase subunit K</fullName>
    </alternativeName>
    <alternativeName>
        <fullName evidence="1">NADH-plastoquinone oxidoreductase subunit K</fullName>
    </alternativeName>
</protein>
<reference evidence="4 7" key="1">
    <citation type="journal article" date="1999" name="Plant Cell Physiol.">
        <title>Chloroplast NADH dehydrogenase from Pisum sativum: characterization of its activity and cloning of ndhK gene.</title>
        <authorList>
            <person name="Elortza F."/>
            <person name="Asturias J.A."/>
            <person name="Arizmendi J.M."/>
        </authorList>
    </citation>
    <scope>NUCLEOTIDE SEQUENCE [GENOMIC DNA]</scope>
    <scope>IDENTIFICATION IN THE NDH COMPLEX</scope>
    <scope>CATALYTIC ACTIVITY OF THE NDH COMPLEX</scope>
    <scope>SUBCELLULAR LOCATION</scope>
    <source>
        <strain evidence="2">cv. Lincoln</strain>
        <tissue evidence="7">Leaf</tissue>
    </source>
</reference>
<reference evidence="4" key="2">
    <citation type="journal article" date="1998" name="Proc. Natl. Acad. Sci. U.S.A.">
        <title>The plastid ndh genes code for an NADH-specific dehydrogenase: isolation of a complex I analogue from pea thylakoid membranes.</title>
        <authorList>
            <person name="Sazanov L.A."/>
            <person name="Burrows P.A."/>
            <person name="Nixon P.J."/>
        </authorList>
    </citation>
    <scope>PROTEIN SEQUENCE OF 1-11</scope>
    <scope>IDENTIFICATION IN THE NDH COMPLEX</scope>
    <scope>FUNCTION</scope>
    <scope>CATALYTIC ACTIVITY OF THE NDH COMPLEX</scope>
    <scope>SUBCELLULAR LOCATION</scope>
    <source>
        <strain evidence="3">cv. Little Marvel</strain>
        <tissue evidence="3">Leaf</tissue>
    </source>
</reference>
<gene>
    <name evidence="1 7" type="primary">ndhK</name>
</gene>